<organismHost>
    <name type="scientific">Homo sapiens</name>
    <name type="common">Human</name>
    <dbReference type="NCBI Taxonomy" id="9606"/>
</organismHost>
<dbReference type="EMBL" id="X17403">
    <property type="protein sequence ID" value="CAA35313.1"/>
    <property type="molecule type" value="Genomic_DNA"/>
</dbReference>
<dbReference type="EMBL" id="X04650">
    <property type="protein sequence ID" value="CAB37096.1"/>
    <property type="molecule type" value="Genomic_DNA"/>
</dbReference>
<dbReference type="EMBL" id="BK000394">
    <property type="protein sequence ID" value="DAA00208.1"/>
    <property type="molecule type" value="Genomic_DNA"/>
</dbReference>
<dbReference type="PIR" id="E26078">
    <property type="entry name" value="QQBEC5"/>
</dbReference>
<dbReference type="PDB" id="1IM3">
    <property type="method" value="X-ray"/>
    <property type="resolution" value="2.20 A"/>
    <property type="chains" value="D/H/L/P=43-137"/>
</dbReference>
<dbReference type="PDBsum" id="1IM3"/>
<dbReference type="SMR" id="P09713"/>
<dbReference type="GlyCosmos" id="P09713">
    <property type="glycosylation" value="1 site, No reported glycans"/>
</dbReference>
<dbReference type="iPTMnet" id="P09713"/>
<dbReference type="EvolutionaryTrace" id="P09713"/>
<dbReference type="Proteomes" id="UP000008991">
    <property type="component" value="Segment"/>
</dbReference>
<dbReference type="Proteomes" id="UP000008992">
    <property type="component" value="Segment"/>
</dbReference>
<dbReference type="GO" id="GO:0044167">
    <property type="term" value="C:host cell endoplasmic reticulum membrane"/>
    <property type="evidence" value="ECO:0007669"/>
    <property type="project" value="UniProtKB-SubCell"/>
</dbReference>
<dbReference type="GO" id="GO:0016020">
    <property type="term" value="C:membrane"/>
    <property type="evidence" value="ECO:0007669"/>
    <property type="project" value="UniProtKB-KW"/>
</dbReference>
<dbReference type="Gene3D" id="2.60.40.1200">
    <property type="match status" value="1"/>
</dbReference>
<dbReference type="InterPro" id="IPR009237">
    <property type="entry name" value="Herpes_US2/US3"/>
</dbReference>
<dbReference type="InterPro" id="IPR014756">
    <property type="entry name" value="Ig_E-set"/>
</dbReference>
<dbReference type="Pfam" id="PF05963">
    <property type="entry name" value="Cytomega_US3"/>
    <property type="match status" value="1"/>
</dbReference>
<dbReference type="SUPFAM" id="SSF81296">
    <property type="entry name" value="E set domains"/>
    <property type="match status" value="1"/>
</dbReference>
<gene>
    <name type="primary">US2</name>
</gene>
<accession>P09713</accession>
<accession>Q7M6I0</accession>
<sequence length="199" mass="23111">MNNLWKAWVGLWTSMGPLIRLPDGITKAGEDALRPWKSTAKHPWFQIEDNRCYIDNGKLFARGSIVGNMSRFVFDPKADYGGVGENLYVHADDVEFVPGESLKWNVRNLDVMPIFETLALRLVLQGDVIWLRCVPELRVDYTSSAYMWNMQYGMVRKSYTHVAWTIVFYSINITLLVLFIVYVTVDCNLSMMWMRFFVC</sequence>
<reference key="1">
    <citation type="journal article" date="1986" name="J. Mol. Biol.">
        <title>Sequence of the short unique region, short repeats, and part of the long repeats of human cytomegalovirus.</title>
        <authorList>
            <person name="Weston K.M."/>
            <person name="Barrell B.G."/>
        </authorList>
    </citation>
    <scope>NUCLEOTIDE SEQUENCE [GENOMIC DNA]</scope>
</reference>
<reference key="2">
    <citation type="journal article" date="1990" name="Curr. Top. Microbiol. Immunol.">
        <title>Analysis of the protein-coding content of the sequence of human cytomegalovirus strain AD169.</title>
        <authorList>
            <person name="Chee M.S."/>
            <person name="Bankier A.T."/>
            <person name="Beck S."/>
            <person name="Bohni R."/>
            <person name="Brown C.M."/>
            <person name="Cerny R."/>
            <person name="Horsnell T."/>
            <person name="Hutchison C.A. III"/>
            <person name="Kouzarides T."/>
            <person name="Martignetti J.A."/>
            <person name="Preddie E."/>
            <person name="Satchwell S.C."/>
            <person name="Tomlinson P."/>
            <person name="Weston K.M."/>
            <person name="Barrell B.G."/>
        </authorList>
    </citation>
    <scope>NUCLEOTIDE SEQUENCE [LARGE SCALE GENOMIC DNA]</scope>
</reference>
<reference key="3">
    <citation type="journal article" date="2003" name="J. Gen. Virol.">
        <title>The human cytomegalovirus genome revisited: comparison with the chimpanzee cytomegalovirus genome.</title>
        <authorList>
            <person name="Davison A.J."/>
            <person name="Dolan A."/>
            <person name="Akter P."/>
            <person name="Addison C."/>
            <person name="Dargan D.J."/>
            <person name="Alcendor D.J."/>
            <person name="McGeoch D.J."/>
            <person name="Hayward G.S."/>
        </authorList>
    </citation>
    <scope>GENOME REANNOTATION</scope>
</reference>
<reference key="4">
    <citation type="journal article" date="2003" name="J. Gen. Virol.">
        <authorList>
            <person name="Davison A.J."/>
            <person name="Dolan A."/>
            <person name="Akter P."/>
            <person name="Addison C."/>
            <person name="Dargan D.J."/>
            <person name="Alcendor D.J."/>
            <person name="McGeoch D.J."/>
            <person name="Hayward G.S."/>
        </authorList>
    </citation>
    <scope>ERRATUM OF PUBMED:12533697</scope>
</reference>
<reference key="5">
    <citation type="journal article" date="1996" name="Nature">
        <title>Sec61-mediated transfer of a membrane protein from the endoplasmic reticulum to the proteasome for destruction.</title>
        <authorList>
            <person name="Wiertz E.J.H.J."/>
            <person name="Tortorella D."/>
            <person name="Bogyo M."/>
            <person name="Yu J."/>
            <person name="Mothes W."/>
            <person name="Jones T.R."/>
            <person name="Rapoport T.A."/>
            <person name="Ploegh H.L."/>
        </authorList>
    </citation>
    <scope>FUNCTION</scope>
</reference>
<reference key="6">
    <citation type="journal article" date="2001" name="J. Virol.">
        <title>Human cytomegalovirus US2 endoplasmic reticulum-lumenal domain dictates association with major histocompatibility complex class I in a locus-specific manner.</title>
        <authorList>
            <person name="Gewurz B.E."/>
            <person name="Wang E.W."/>
            <person name="Tortorella D."/>
            <person name="Schust D.J."/>
            <person name="Ploegh H.L."/>
        </authorList>
    </citation>
    <scope>BINDING TO CLASS I MOLECULES</scope>
</reference>
<reference key="7">
    <citation type="journal article" date="2002" name="J. Biol. Chem.">
        <title>US2, a human cytomegalovirus-encoded type I membrane protein, contains a non-cleavable amino-terminal signal peptide.</title>
        <authorList>
            <person name="Gewurz B.E."/>
            <person name="Ploegh H.L."/>
            <person name="Tortorella D."/>
        </authorList>
    </citation>
    <scope>SUBCELLULAR LOCATION</scope>
    <scope>GLYCOSYLATION AT ASN-68</scope>
    <scope>NON-CLEAVABLE SIGNAL PEPTIDE</scope>
</reference>
<reference key="8">
    <citation type="journal article" date="2006" name="Mol. Immunol.">
        <title>Human cytomegalovirus-encoded US2 and US11 target unassembled MHC class I heavy chains for degradation.</title>
        <authorList>
            <person name="Barel M.T."/>
            <person name="Hassink G.C."/>
            <person name="van Voorden S."/>
            <person name="Wiertz E.J."/>
        </authorList>
    </citation>
    <scope>FUNCTION</scope>
</reference>
<reference key="9">
    <citation type="journal article" date="2009" name="J. Biol. Chem.">
        <title>TRAM1 participates in human cytomegalovirus US2- and US11-mediated dislocation of an endoplasmic reticulum membrane glycoprotein.</title>
        <authorList>
            <person name="Oresic K."/>
            <person name="Ng C.L."/>
            <person name="Tortorella D."/>
        </authorList>
    </citation>
    <scope>FUNCTION</scope>
    <scope>INTERACTION WITH HOST TRAM1</scope>
</reference>
<reference key="10">
    <citation type="journal article" date="2001" name="Proc. Natl. Acad. Sci. U.S.A.">
        <title>Antigen presentation subverted: structure of the human cytomegalovirus protein US2 bound to the class I molecule HLA-A2.</title>
        <authorList>
            <person name="Gewurz B.E."/>
            <person name="Gaudet R."/>
            <person name="Tortorella D."/>
            <person name="Wang E.W."/>
            <person name="Ploegh H.L."/>
            <person name="Wiley D.C."/>
        </authorList>
    </citation>
    <scope>X-RAY CRYSTALLOGRAPHY (2.2 ANGSTROMS) OF 43-137 OF COMPLEX WITH HLA-A2/TAX</scope>
    <scope>DISULFIDE BONDS</scope>
</reference>
<proteinExistence type="evidence at protein level"/>
<comment type="function">
    <text evidence="4 5 6">Participates in the inhibition of the host immune response. Early protein that redirects newly synthesized major histocompatibility complex (MHC) class I heavy chains via the SEC61 translocon to the cytosol where they undergo proteasome-dependent destruction (PubMed:19121997). In consequence, infected cells are masked for immune recognition by cytotoxic T lymphocytes. Seems so far to be specific for HLA-A, HLA-B, and HFE loci products. Does not interact with HLA-DR or HLA-DM.</text>
</comment>
<comment type="subunit">
    <text evidence="5 7">Monomer (Probable). Interacts with host TRAM1 (PubMed:19121997).</text>
</comment>
<comment type="subcellular location">
    <subcellularLocation>
        <location evidence="3">Host endoplasmic reticulum membrane</location>
        <topology evidence="3">Single-pass type I membrane protein</topology>
    </subcellularLocation>
</comment>
<comment type="developmental stage">
    <text>Expressed at early period of virus infection.</text>
</comment>
<comment type="domain">
    <text>The lumenal domain allows tight interaction with class I molecules encoded by the HLA-A locus.</text>
</comment>
<comment type="PTM">
    <text>The signal sequence is not cleaved.</text>
</comment>
<comment type="similarity">
    <text evidence="7">Belongs to the cytomegalovirus US2 family.</text>
</comment>
<protein>
    <recommendedName>
        <fullName>Unique short US2 glycoprotein</fullName>
    </recommendedName>
    <alternativeName>
        <fullName>Protein HQLF2</fullName>
    </alternativeName>
    <alternativeName>
        <fullName>gpUS2</fullName>
    </alternativeName>
</protein>
<organism>
    <name type="scientific">Human cytomegalovirus (strain AD169)</name>
    <name type="common">HHV-5</name>
    <name type="synonym">Human herpesvirus 5</name>
    <dbReference type="NCBI Taxonomy" id="10360"/>
    <lineage>
        <taxon>Viruses</taxon>
        <taxon>Duplodnaviria</taxon>
        <taxon>Heunggongvirae</taxon>
        <taxon>Peploviricota</taxon>
        <taxon>Herviviricetes</taxon>
        <taxon>Herpesvirales</taxon>
        <taxon>Orthoherpesviridae</taxon>
        <taxon>Betaherpesvirinae</taxon>
        <taxon>Cytomegalovirus</taxon>
        <taxon>Cytomegalovirus humanbeta5</taxon>
        <taxon>Human cytomegalovirus</taxon>
    </lineage>
</organism>
<evidence type="ECO:0000255" key="1"/>
<evidence type="ECO:0000269" key="2">
    <source>
    </source>
</evidence>
<evidence type="ECO:0000269" key="3">
    <source>
    </source>
</evidence>
<evidence type="ECO:0000269" key="4">
    <source>
    </source>
</evidence>
<evidence type="ECO:0000269" key="5">
    <source>
    </source>
</evidence>
<evidence type="ECO:0000269" key="6">
    <source>
    </source>
</evidence>
<evidence type="ECO:0000305" key="7"/>
<evidence type="ECO:0000305" key="8">
    <source>
    </source>
</evidence>
<evidence type="ECO:0007829" key="9">
    <source>
        <dbReference type="PDB" id="1IM3"/>
    </source>
</evidence>
<feature type="chain" id="PRO_0000223275" description="Unique short US2 glycoprotein">
    <location>
        <begin position="1"/>
        <end position="199"/>
    </location>
</feature>
<feature type="signal peptide" description="Not cleaved">
    <location>
        <begin position="1"/>
        <end status="unknown"/>
    </location>
</feature>
<feature type="topological domain" description="Lumenal" evidence="1">
    <location>
        <begin position="1"/>
        <end position="161"/>
    </location>
</feature>
<feature type="transmembrane region" description="Helical" evidence="1">
    <location>
        <begin position="162"/>
        <end position="182"/>
    </location>
</feature>
<feature type="topological domain" description="Cytoplasmic" evidence="1">
    <location>
        <begin position="183"/>
        <end position="199"/>
    </location>
</feature>
<feature type="domain" description="Ig-like H-type">
    <location>
        <begin position="43"/>
        <end position="137"/>
    </location>
</feature>
<feature type="glycosylation site" description="N-linked (GlcNAc...) asparagine; by host" evidence="8">
    <location>
        <position position="68"/>
    </location>
</feature>
<feature type="disulfide bond" evidence="2">
    <location>
        <begin position="52"/>
        <end position="133"/>
    </location>
</feature>
<feature type="strand" evidence="9">
    <location>
        <begin position="45"/>
        <end position="54"/>
    </location>
</feature>
<feature type="strand" evidence="9">
    <location>
        <begin position="56"/>
        <end position="67"/>
    </location>
</feature>
<feature type="strand" evidence="9">
    <location>
        <begin position="72"/>
        <end position="82"/>
    </location>
</feature>
<feature type="strand" evidence="9">
    <location>
        <begin position="84"/>
        <end position="86"/>
    </location>
</feature>
<feature type="helix" evidence="9">
    <location>
        <begin position="91"/>
        <end position="93"/>
    </location>
</feature>
<feature type="strand" evidence="9">
    <location>
        <begin position="94"/>
        <end position="97"/>
    </location>
</feature>
<feature type="turn" evidence="9">
    <location>
        <begin position="98"/>
        <end position="100"/>
    </location>
</feature>
<feature type="strand" evidence="9">
    <location>
        <begin position="101"/>
        <end position="110"/>
    </location>
</feature>
<feature type="strand" evidence="9">
    <location>
        <begin position="117"/>
        <end position="124"/>
    </location>
</feature>
<feature type="strand" evidence="9">
    <location>
        <begin position="127"/>
        <end position="133"/>
    </location>
</feature>
<keyword id="KW-0002">3D-structure</keyword>
<keyword id="KW-1015">Disulfide bond</keyword>
<keyword id="KW-0244">Early protein</keyword>
<keyword id="KW-0325">Glycoprotein</keyword>
<keyword id="KW-1038">Host endoplasmic reticulum</keyword>
<keyword id="KW-1043">Host membrane</keyword>
<keyword id="KW-0945">Host-virus interaction</keyword>
<keyword id="KW-0393">Immunoglobulin domain</keyword>
<keyword id="KW-0472">Membrane</keyword>
<keyword id="KW-1185">Reference proteome</keyword>
<keyword id="KW-0732">Signal</keyword>
<keyword id="KW-0812">Transmembrane</keyword>
<keyword id="KW-1133">Transmembrane helix</keyword>
<keyword id="KW-0899">Viral immunoevasion</keyword>
<name>US02_HCMVA</name>